<gene>
    <name type="primary">matK</name>
</gene>
<reference key="1">
    <citation type="journal article" date="2007" name="Proc. Natl. Acad. Sci. U.S.A.">
        <title>Analysis of 81 genes from 64 plastid genomes resolves relationships in angiosperms and identifies genome-scale evolutionary patterns.</title>
        <authorList>
            <person name="Jansen R.K."/>
            <person name="Cai Z."/>
            <person name="Raubeson L.A."/>
            <person name="Daniell H."/>
            <person name="dePamphilis C.W."/>
            <person name="Leebens-Mack J."/>
            <person name="Muller K.F."/>
            <person name="Guisinger-Bellian M."/>
            <person name="Haberle R.C."/>
            <person name="Hansen A.K."/>
            <person name="Chumley T.W."/>
            <person name="Lee S.B."/>
            <person name="Peery R."/>
            <person name="McNeal J.R."/>
            <person name="Kuehl J.V."/>
            <person name="Boore J.L."/>
        </authorList>
    </citation>
    <scope>NUCLEOTIDE SEQUENCE [GENOMIC DNA]</scope>
</reference>
<reference key="2">
    <citation type="journal article" date="2008" name="J. Mol. Evol.">
        <title>Extensive rearrangements in the chloroplast genome of Trachelium caeruleum are associated with repeats and tRNA genes.</title>
        <authorList>
            <person name="Haberle R.C."/>
            <person name="Fourcade H.M."/>
            <person name="Boore J.L."/>
            <person name="Jansen R.K."/>
        </authorList>
    </citation>
    <scope>NUCLEOTIDE SEQUENCE [LARGE SCALE GENOMIC DNA]</scope>
</reference>
<comment type="function">
    <text evidence="1">Usually encoded in the trnK tRNA gene intron. Probably assists in splicing its own and other chloroplast group II introns (By similarity).</text>
</comment>
<comment type="subcellular location">
    <subcellularLocation>
        <location>Plastid</location>
        <location>Chloroplast</location>
    </subcellularLocation>
</comment>
<comment type="similarity">
    <text evidence="2">Belongs to the intron maturase 2 family. MatK subfamily.</text>
</comment>
<feature type="chain" id="PRO_0000363784" description="Maturase K">
    <location>
        <begin position="1"/>
        <end position="514"/>
    </location>
</feature>
<evidence type="ECO:0000250" key="1"/>
<evidence type="ECO:0000305" key="2"/>
<organism>
    <name type="scientific">Trachelium caeruleum</name>
    <name type="common">Blue throatwort</name>
    <dbReference type="NCBI Taxonomy" id="28494"/>
    <lineage>
        <taxon>Eukaryota</taxon>
        <taxon>Viridiplantae</taxon>
        <taxon>Streptophyta</taxon>
        <taxon>Embryophyta</taxon>
        <taxon>Tracheophyta</taxon>
        <taxon>Spermatophyta</taxon>
        <taxon>Magnoliopsida</taxon>
        <taxon>eudicotyledons</taxon>
        <taxon>Gunneridae</taxon>
        <taxon>Pentapetalae</taxon>
        <taxon>asterids</taxon>
        <taxon>campanulids</taxon>
        <taxon>Asterales</taxon>
        <taxon>Campanulaceae</taxon>
        <taxon>Trachelium</taxon>
    </lineage>
</organism>
<dbReference type="EMBL" id="EU017222">
    <property type="protein sequence ID" value="ABU85633.1"/>
    <property type="molecule type" value="Genomic_DNA"/>
</dbReference>
<dbReference type="EMBL" id="EU090187">
    <property type="protein sequence ID" value="ABV26464.1"/>
    <property type="molecule type" value="Genomic_DNA"/>
</dbReference>
<dbReference type="RefSeq" id="YP_001718639.1">
    <property type="nucleotide sequence ID" value="NC_010442.1"/>
</dbReference>
<dbReference type="GeneID" id="6155949"/>
<dbReference type="GO" id="GO:0009507">
    <property type="term" value="C:chloroplast"/>
    <property type="evidence" value="ECO:0007669"/>
    <property type="project" value="UniProtKB-SubCell"/>
</dbReference>
<dbReference type="GO" id="GO:0003723">
    <property type="term" value="F:RNA binding"/>
    <property type="evidence" value="ECO:0007669"/>
    <property type="project" value="UniProtKB-KW"/>
</dbReference>
<dbReference type="GO" id="GO:0006397">
    <property type="term" value="P:mRNA processing"/>
    <property type="evidence" value="ECO:0007669"/>
    <property type="project" value="UniProtKB-KW"/>
</dbReference>
<dbReference type="GO" id="GO:0008380">
    <property type="term" value="P:RNA splicing"/>
    <property type="evidence" value="ECO:0007669"/>
    <property type="project" value="UniProtKB-UniRule"/>
</dbReference>
<dbReference type="GO" id="GO:0008033">
    <property type="term" value="P:tRNA processing"/>
    <property type="evidence" value="ECO:0007669"/>
    <property type="project" value="UniProtKB-KW"/>
</dbReference>
<dbReference type="HAMAP" id="MF_01390">
    <property type="entry name" value="MatK"/>
    <property type="match status" value="1"/>
</dbReference>
<dbReference type="InterPro" id="IPR024937">
    <property type="entry name" value="Domain_X"/>
</dbReference>
<dbReference type="InterPro" id="IPR002866">
    <property type="entry name" value="Maturase_MatK"/>
</dbReference>
<dbReference type="InterPro" id="IPR024942">
    <property type="entry name" value="Maturase_MatK_N"/>
</dbReference>
<dbReference type="PANTHER" id="PTHR34811">
    <property type="entry name" value="MATURASE K"/>
    <property type="match status" value="1"/>
</dbReference>
<dbReference type="PANTHER" id="PTHR34811:SF1">
    <property type="entry name" value="MATURASE K"/>
    <property type="match status" value="1"/>
</dbReference>
<dbReference type="Pfam" id="PF01348">
    <property type="entry name" value="Intron_maturas2"/>
    <property type="match status" value="1"/>
</dbReference>
<dbReference type="Pfam" id="PF01824">
    <property type="entry name" value="MatK_N"/>
    <property type="match status" value="1"/>
</dbReference>
<proteinExistence type="inferred from homology"/>
<accession>A9QC40</accession>
<sequence>MAEFQSALELNRFQQHDFLYPLIFQEYIYALAHDHGLNRSILLKNAGYDKKFSLLIVKRLITRMYDQNYLIHSTNDCKQKPFWGRNNHFDSQMISEAFSVIMEIPFSLRLLSWLEKFEKTGTGRVKSDNLRSINLRSIHSIFSFLEDKISHLYYVLDILIPYPIHLEILVQALRYWLKDASSLHFVRFFLHEFHNWNSLITSKKVGPSFSEINQRFFFFLYNSHVCEYESIFVFLRNQSSYLRSTSYRALVERIYFYGKIEHLGEVLSRAFQANLSIFTDSFMHYVRYQGKLILASKGTSLVMNKWNYYFVNFWQSYFYLWSQPRRIHINQLSNHSLDFLAYFSSVRRRTSTVRNQMLSKLFLSDNAINKFDTFVPIIPMIGSLAKSKFCNRAGHPISKAVWLDLSDSDIIDRFGRIARNLSHYHSGSSNKKSLSRIKYILQLSCARTLARXHKSTVRAFLKIFGSELLEEFFTSEEQVLSLTFPRASSISRRLYSERVWYLDISCINELANHD</sequence>
<keyword id="KW-0150">Chloroplast</keyword>
<keyword id="KW-0507">mRNA processing</keyword>
<keyword id="KW-0934">Plastid</keyword>
<keyword id="KW-0694">RNA-binding</keyword>
<keyword id="KW-0819">tRNA processing</keyword>
<protein>
    <recommendedName>
        <fullName>Maturase K</fullName>
    </recommendedName>
    <alternativeName>
        <fullName>Intron maturase</fullName>
    </alternativeName>
</protein>
<name>MATK_TRACE</name>
<geneLocation type="chloroplast"/>